<accession>C0ZAP9</accession>
<keyword id="KW-0963">Cytoplasm</keyword>
<keyword id="KW-0328">Glycosyltransferase</keyword>
<keyword id="KW-0660">Purine salvage</keyword>
<keyword id="KW-1185">Reference proteome</keyword>
<keyword id="KW-0808">Transferase</keyword>
<proteinExistence type="inferred from homology"/>
<name>APT_BREBN</name>
<comment type="function">
    <text evidence="1">Catalyzes a salvage reaction resulting in the formation of AMP, that is energically less costly than de novo synthesis.</text>
</comment>
<comment type="catalytic activity">
    <reaction evidence="1">
        <text>AMP + diphosphate = 5-phospho-alpha-D-ribose 1-diphosphate + adenine</text>
        <dbReference type="Rhea" id="RHEA:16609"/>
        <dbReference type="ChEBI" id="CHEBI:16708"/>
        <dbReference type="ChEBI" id="CHEBI:33019"/>
        <dbReference type="ChEBI" id="CHEBI:58017"/>
        <dbReference type="ChEBI" id="CHEBI:456215"/>
        <dbReference type="EC" id="2.4.2.7"/>
    </reaction>
</comment>
<comment type="pathway">
    <text evidence="1">Purine metabolism; AMP biosynthesis via salvage pathway; AMP from adenine: step 1/1.</text>
</comment>
<comment type="subunit">
    <text evidence="1">Homodimer.</text>
</comment>
<comment type="subcellular location">
    <subcellularLocation>
        <location evidence="1">Cytoplasm</location>
    </subcellularLocation>
</comment>
<comment type="similarity">
    <text evidence="1">Belongs to the purine/pyrimidine phosphoribosyltransferase family.</text>
</comment>
<reference key="1">
    <citation type="submission" date="2005-03" db="EMBL/GenBank/DDBJ databases">
        <title>Brevibacillus brevis strain 47, complete genome.</title>
        <authorList>
            <person name="Hosoyama A."/>
            <person name="Yamada R."/>
            <person name="Hongo Y."/>
            <person name="Terui Y."/>
            <person name="Ankai A."/>
            <person name="Masuyama W."/>
            <person name="Sekiguchi M."/>
            <person name="Takeda T."/>
            <person name="Asano K."/>
            <person name="Ohji S."/>
            <person name="Ichikawa N."/>
            <person name="Narita S."/>
            <person name="Aoki N."/>
            <person name="Miura H."/>
            <person name="Matsushita S."/>
            <person name="Sekigawa T."/>
            <person name="Yamagata H."/>
            <person name="Yoshikawa H."/>
            <person name="Udaka S."/>
            <person name="Tanikawa S."/>
            <person name="Fujita N."/>
        </authorList>
    </citation>
    <scope>NUCLEOTIDE SEQUENCE [LARGE SCALE GENOMIC DNA]</scope>
    <source>
        <strain>47 / JCM 6285 / NBRC 100599</strain>
    </source>
</reference>
<gene>
    <name evidence="1" type="primary">apt</name>
    <name type="ordered locus">BBR47_18810</name>
</gene>
<evidence type="ECO:0000255" key="1">
    <source>
        <dbReference type="HAMAP-Rule" id="MF_00004"/>
    </source>
</evidence>
<dbReference type="EC" id="2.4.2.7" evidence="1"/>
<dbReference type="EMBL" id="AP008955">
    <property type="protein sequence ID" value="BAH42858.1"/>
    <property type="molecule type" value="Genomic_DNA"/>
</dbReference>
<dbReference type="RefSeq" id="WP_012685596.1">
    <property type="nucleotide sequence ID" value="NC_012491.1"/>
</dbReference>
<dbReference type="SMR" id="C0ZAP9"/>
<dbReference type="STRING" id="358681.BBR47_18810"/>
<dbReference type="KEGG" id="bbe:BBR47_18810"/>
<dbReference type="eggNOG" id="COG0503">
    <property type="taxonomic scope" value="Bacteria"/>
</dbReference>
<dbReference type="HOGENOM" id="CLU_063339_3_0_9"/>
<dbReference type="UniPathway" id="UPA00588">
    <property type="reaction ID" value="UER00646"/>
</dbReference>
<dbReference type="Proteomes" id="UP000001877">
    <property type="component" value="Chromosome"/>
</dbReference>
<dbReference type="GO" id="GO:0005737">
    <property type="term" value="C:cytoplasm"/>
    <property type="evidence" value="ECO:0007669"/>
    <property type="project" value="UniProtKB-SubCell"/>
</dbReference>
<dbReference type="GO" id="GO:0002055">
    <property type="term" value="F:adenine binding"/>
    <property type="evidence" value="ECO:0007669"/>
    <property type="project" value="TreeGrafter"/>
</dbReference>
<dbReference type="GO" id="GO:0003999">
    <property type="term" value="F:adenine phosphoribosyltransferase activity"/>
    <property type="evidence" value="ECO:0007669"/>
    <property type="project" value="UniProtKB-UniRule"/>
</dbReference>
<dbReference type="GO" id="GO:0016208">
    <property type="term" value="F:AMP binding"/>
    <property type="evidence" value="ECO:0007669"/>
    <property type="project" value="TreeGrafter"/>
</dbReference>
<dbReference type="GO" id="GO:0006168">
    <property type="term" value="P:adenine salvage"/>
    <property type="evidence" value="ECO:0007669"/>
    <property type="project" value="InterPro"/>
</dbReference>
<dbReference type="GO" id="GO:0044209">
    <property type="term" value="P:AMP salvage"/>
    <property type="evidence" value="ECO:0007669"/>
    <property type="project" value="UniProtKB-UniRule"/>
</dbReference>
<dbReference type="GO" id="GO:0006166">
    <property type="term" value="P:purine ribonucleoside salvage"/>
    <property type="evidence" value="ECO:0007669"/>
    <property type="project" value="UniProtKB-KW"/>
</dbReference>
<dbReference type="CDD" id="cd06223">
    <property type="entry name" value="PRTases_typeI"/>
    <property type="match status" value="1"/>
</dbReference>
<dbReference type="FunFam" id="3.40.50.2020:FF:000004">
    <property type="entry name" value="Adenine phosphoribosyltransferase"/>
    <property type="match status" value="1"/>
</dbReference>
<dbReference type="Gene3D" id="3.40.50.2020">
    <property type="match status" value="1"/>
</dbReference>
<dbReference type="HAMAP" id="MF_00004">
    <property type="entry name" value="Aden_phosphoribosyltr"/>
    <property type="match status" value="1"/>
</dbReference>
<dbReference type="InterPro" id="IPR005764">
    <property type="entry name" value="Ade_phspho_trans"/>
</dbReference>
<dbReference type="InterPro" id="IPR000836">
    <property type="entry name" value="PRibTrfase_dom"/>
</dbReference>
<dbReference type="InterPro" id="IPR029057">
    <property type="entry name" value="PRTase-like"/>
</dbReference>
<dbReference type="InterPro" id="IPR050054">
    <property type="entry name" value="UPRTase/APRTase"/>
</dbReference>
<dbReference type="NCBIfam" id="TIGR01090">
    <property type="entry name" value="apt"/>
    <property type="match status" value="1"/>
</dbReference>
<dbReference type="NCBIfam" id="NF002633">
    <property type="entry name" value="PRK02304.1-2"/>
    <property type="match status" value="1"/>
</dbReference>
<dbReference type="NCBIfam" id="NF002634">
    <property type="entry name" value="PRK02304.1-3"/>
    <property type="match status" value="1"/>
</dbReference>
<dbReference type="NCBIfam" id="NF002636">
    <property type="entry name" value="PRK02304.1-5"/>
    <property type="match status" value="1"/>
</dbReference>
<dbReference type="PANTHER" id="PTHR32315">
    <property type="entry name" value="ADENINE PHOSPHORIBOSYLTRANSFERASE"/>
    <property type="match status" value="1"/>
</dbReference>
<dbReference type="PANTHER" id="PTHR32315:SF3">
    <property type="entry name" value="ADENINE PHOSPHORIBOSYLTRANSFERASE"/>
    <property type="match status" value="1"/>
</dbReference>
<dbReference type="Pfam" id="PF00156">
    <property type="entry name" value="Pribosyltran"/>
    <property type="match status" value="1"/>
</dbReference>
<dbReference type="SUPFAM" id="SSF53271">
    <property type="entry name" value="PRTase-like"/>
    <property type="match status" value="1"/>
</dbReference>
<protein>
    <recommendedName>
        <fullName evidence="1">Adenine phosphoribosyltransferase</fullName>
        <shortName evidence="1">APRT</shortName>
        <ecNumber evidence="1">2.4.2.7</ecNumber>
    </recommendedName>
</protein>
<organism>
    <name type="scientific">Brevibacillus brevis (strain 47 / JCM 6285 / NBRC 100599)</name>
    <dbReference type="NCBI Taxonomy" id="358681"/>
    <lineage>
        <taxon>Bacteria</taxon>
        <taxon>Bacillati</taxon>
        <taxon>Bacillota</taxon>
        <taxon>Bacilli</taxon>
        <taxon>Bacillales</taxon>
        <taxon>Paenibacillaceae</taxon>
        <taxon>Brevibacillus</taxon>
    </lineage>
</organism>
<sequence>MDFKQYIRVIPDFPQPGIRFKDITTLLKDGPAYKAAIQDLAVFAREVQADVIAGPEARGFVVGAPLSYEMGIGFVPIRKSGKLPYESIKANYDLEYGKDALAVHVDAIQPGQRVLIADDLLATGGTIETTINLIEQLGGKVVGAAFFIELSYLDGRSKIGEIPIKSLVQY</sequence>
<feature type="chain" id="PRO_1000116234" description="Adenine phosphoribosyltransferase">
    <location>
        <begin position="1"/>
        <end position="170"/>
    </location>
</feature>